<name>DAPE_SHESR</name>
<reference key="1">
    <citation type="submission" date="2006-08" db="EMBL/GenBank/DDBJ databases">
        <title>Complete sequence of chromosome 1 of Shewanella sp. MR-7.</title>
        <authorList>
            <person name="Copeland A."/>
            <person name="Lucas S."/>
            <person name="Lapidus A."/>
            <person name="Barry K."/>
            <person name="Detter J.C."/>
            <person name="Glavina del Rio T."/>
            <person name="Hammon N."/>
            <person name="Israni S."/>
            <person name="Dalin E."/>
            <person name="Tice H."/>
            <person name="Pitluck S."/>
            <person name="Kiss H."/>
            <person name="Brettin T."/>
            <person name="Bruce D."/>
            <person name="Han C."/>
            <person name="Tapia R."/>
            <person name="Gilna P."/>
            <person name="Schmutz J."/>
            <person name="Larimer F."/>
            <person name="Land M."/>
            <person name="Hauser L."/>
            <person name="Kyrpides N."/>
            <person name="Mikhailova N."/>
            <person name="Nealson K."/>
            <person name="Konstantinidis K."/>
            <person name="Klappenbach J."/>
            <person name="Tiedje J."/>
            <person name="Richardson P."/>
        </authorList>
    </citation>
    <scope>NUCLEOTIDE SEQUENCE [LARGE SCALE GENOMIC DNA]</scope>
    <source>
        <strain>MR-7</strain>
    </source>
</reference>
<evidence type="ECO:0000255" key="1">
    <source>
        <dbReference type="HAMAP-Rule" id="MF_01690"/>
    </source>
</evidence>
<dbReference type="EC" id="3.5.1.18" evidence="1"/>
<dbReference type="EMBL" id="CP000444">
    <property type="protein sequence ID" value="ABI43109.1"/>
    <property type="molecule type" value="Genomic_DNA"/>
</dbReference>
<dbReference type="SMR" id="Q0HUU6"/>
<dbReference type="KEGG" id="shm:Shewmr7_2121"/>
<dbReference type="HOGENOM" id="CLU_021802_4_0_6"/>
<dbReference type="UniPathway" id="UPA00034">
    <property type="reaction ID" value="UER00021"/>
</dbReference>
<dbReference type="GO" id="GO:0008777">
    <property type="term" value="F:acetylornithine deacetylase activity"/>
    <property type="evidence" value="ECO:0007669"/>
    <property type="project" value="TreeGrafter"/>
</dbReference>
<dbReference type="GO" id="GO:0050897">
    <property type="term" value="F:cobalt ion binding"/>
    <property type="evidence" value="ECO:0007669"/>
    <property type="project" value="UniProtKB-UniRule"/>
</dbReference>
<dbReference type="GO" id="GO:0009014">
    <property type="term" value="F:succinyl-diaminopimelate desuccinylase activity"/>
    <property type="evidence" value="ECO:0007669"/>
    <property type="project" value="UniProtKB-UniRule"/>
</dbReference>
<dbReference type="GO" id="GO:0008270">
    <property type="term" value="F:zinc ion binding"/>
    <property type="evidence" value="ECO:0007669"/>
    <property type="project" value="UniProtKB-UniRule"/>
</dbReference>
<dbReference type="GO" id="GO:0019877">
    <property type="term" value="P:diaminopimelate biosynthetic process"/>
    <property type="evidence" value="ECO:0007669"/>
    <property type="project" value="UniProtKB-UniRule"/>
</dbReference>
<dbReference type="GO" id="GO:0006526">
    <property type="term" value="P:L-arginine biosynthetic process"/>
    <property type="evidence" value="ECO:0007669"/>
    <property type="project" value="TreeGrafter"/>
</dbReference>
<dbReference type="GO" id="GO:0009089">
    <property type="term" value="P:lysine biosynthetic process via diaminopimelate"/>
    <property type="evidence" value="ECO:0007669"/>
    <property type="project" value="UniProtKB-UniRule"/>
</dbReference>
<dbReference type="CDD" id="cd03891">
    <property type="entry name" value="M20_DapE_proteobac"/>
    <property type="match status" value="1"/>
</dbReference>
<dbReference type="FunFam" id="3.30.70.360:FF:000011">
    <property type="entry name" value="Succinyl-diaminopimelate desuccinylase"/>
    <property type="match status" value="1"/>
</dbReference>
<dbReference type="FunFam" id="3.40.630.10:FF:000005">
    <property type="entry name" value="Succinyl-diaminopimelate desuccinylase"/>
    <property type="match status" value="1"/>
</dbReference>
<dbReference type="FunFam" id="3.40.630.10:FF:000192">
    <property type="entry name" value="Succinyl-diaminopimelate desuccinylase"/>
    <property type="match status" value="1"/>
</dbReference>
<dbReference type="Gene3D" id="3.40.630.10">
    <property type="entry name" value="Zn peptidases"/>
    <property type="match status" value="2"/>
</dbReference>
<dbReference type="HAMAP" id="MF_01690">
    <property type="entry name" value="DapE"/>
    <property type="match status" value="1"/>
</dbReference>
<dbReference type="InterPro" id="IPR001261">
    <property type="entry name" value="ArgE/DapE_CS"/>
</dbReference>
<dbReference type="InterPro" id="IPR036264">
    <property type="entry name" value="Bact_exopeptidase_dim_dom"/>
</dbReference>
<dbReference type="InterPro" id="IPR005941">
    <property type="entry name" value="DapE_proteobac"/>
</dbReference>
<dbReference type="InterPro" id="IPR002933">
    <property type="entry name" value="Peptidase_M20"/>
</dbReference>
<dbReference type="InterPro" id="IPR011650">
    <property type="entry name" value="Peptidase_M20_dimer"/>
</dbReference>
<dbReference type="InterPro" id="IPR050072">
    <property type="entry name" value="Peptidase_M20A"/>
</dbReference>
<dbReference type="NCBIfam" id="TIGR01246">
    <property type="entry name" value="dapE_proteo"/>
    <property type="match status" value="1"/>
</dbReference>
<dbReference type="NCBIfam" id="NF009557">
    <property type="entry name" value="PRK13009.1"/>
    <property type="match status" value="1"/>
</dbReference>
<dbReference type="PANTHER" id="PTHR43808">
    <property type="entry name" value="ACETYLORNITHINE DEACETYLASE"/>
    <property type="match status" value="1"/>
</dbReference>
<dbReference type="PANTHER" id="PTHR43808:SF31">
    <property type="entry name" value="N-ACETYL-L-CITRULLINE DEACETYLASE"/>
    <property type="match status" value="1"/>
</dbReference>
<dbReference type="Pfam" id="PF07687">
    <property type="entry name" value="M20_dimer"/>
    <property type="match status" value="1"/>
</dbReference>
<dbReference type="Pfam" id="PF01546">
    <property type="entry name" value="Peptidase_M20"/>
    <property type="match status" value="1"/>
</dbReference>
<dbReference type="SUPFAM" id="SSF55031">
    <property type="entry name" value="Bacterial exopeptidase dimerisation domain"/>
    <property type="match status" value="1"/>
</dbReference>
<dbReference type="SUPFAM" id="SSF53187">
    <property type="entry name" value="Zn-dependent exopeptidases"/>
    <property type="match status" value="1"/>
</dbReference>
<dbReference type="PROSITE" id="PS00759">
    <property type="entry name" value="ARGE_DAPE_CPG2_2"/>
    <property type="match status" value="1"/>
</dbReference>
<comment type="function">
    <text evidence="1">Catalyzes the hydrolysis of N-succinyl-L,L-diaminopimelic acid (SDAP), forming succinate and LL-2,6-diaminopimelate (DAP), an intermediate involved in the bacterial biosynthesis of lysine and meso-diaminopimelic acid, an essential component of bacterial cell walls.</text>
</comment>
<comment type="catalytic activity">
    <reaction evidence="1">
        <text>N-succinyl-(2S,6S)-2,6-diaminopimelate + H2O = (2S,6S)-2,6-diaminopimelate + succinate</text>
        <dbReference type="Rhea" id="RHEA:22608"/>
        <dbReference type="ChEBI" id="CHEBI:15377"/>
        <dbReference type="ChEBI" id="CHEBI:30031"/>
        <dbReference type="ChEBI" id="CHEBI:57609"/>
        <dbReference type="ChEBI" id="CHEBI:58087"/>
        <dbReference type="EC" id="3.5.1.18"/>
    </reaction>
</comment>
<comment type="cofactor">
    <cofactor evidence="1">
        <name>Zn(2+)</name>
        <dbReference type="ChEBI" id="CHEBI:29105"/>
    </cofactor>
    <cofactor evidence="1">
        <name>Co(2+)</name>
        <dbReference type="ChEBI" id="CHEBI:48828"/>
    </cofactor>
    <text evidence="1">Binds 2 Zn(2+) or Co(2+) ions per subunit.</text>
</comment>
<comment type="pathway">
    <text evidence="1">Amino-acid biosynthesis; L-lysine biosynthesis via DAP pathway; LL-2,6-diaminopimelate from (S)-tetrahydrodipicolinate (succinylase route): step 3/3.</text>
</comment>
<comment type="subunit">
    <text evidence="1">Homodimer.</text>
</comment>
<comment type="similarity">
    <text evidence="1">Belongs to the peptidase M20A family. DapE subfamily.</text>
</comment>
<accession>Q0HUU6</accession>
<organism>
    <name type="scientific">Shewanella sp. (strain MR-7)</name>
    <dbReference type="NCBI Taxonomy" id="60481"/>
    <lineage>
        <taxon>Bacteria</taxon>
        <taxon>Pseudomonadati</taxon>
        <taxon>Pseudomonadota</taxon>
        <taxon>Gammaproteobacteria</taxon>
        <taxon>Alteromonadales</taxon>
        <taxon>Shewanellaceae</taxon>
        <taxon>Shewanella</taxon>
    </lineage>
</organism>
<sequence>MTHASNTHPVTELTKELIARPSVTPLDEGCQTLMAERLAAIGFNIEPMVFEDTTNMWARRGNEGPVFCFAGHTDVVPAGDLSRWHTPPFEPTIIDGYLYGRGAADMKGSLAAMIVATERFVAKHPNHPGSIAFLITSDEEGPFINGTTRVIDTLEARNEKITWALVGEPSSTLKLGDVVKNGRRGSLTANLTVKGIQGHVAYPHLADNPIHKAAPFLAELSQTHWDNGNEFFPPTSMQIANINGGTGASNVIPGTLEVMFNFRYSTEVTAEILIERVEALLTAHELDYDISWTFNGLPFLTGEGPLLDATRHAIRQITGYDTDPQTTGGTSDGRFIAPTGAKVLELGPVNATIHKVNECVKIDDLEQLALCYEVILEQLLC</sequence>
<proteinExistence type="inferred from homology"/>
<feature type="chain" id="PRO_0000375742" description="Succinyl-diaminopimelate desuccinylase">
    <location>
        <begin position="1"/>
        <end position="381"/>
    </location>
</feature>
<feature type="active site" evidence="1">
    <location>
        <position position="74"/>
    </location>
</feature>
<feature type="active site" description="Proton acceptor" evidence="1">
    <location>
        <position position="139"/>
    </location>
</feature>
<feature type="binding site" evidence="1">
    <location>
        <position position="72"/>
    </location>
    <ligand>
        <name>Zn(2+)</name>
        <dbReference type="ChEBI" id="CHEBI:29105"/>
        <label>1</label>
    </ligand>
</feature>
<feature type="binding site" evidence="1">
    <location>
        <position position="105"/>
    </location>
    <ligand>
        <name>Zn(2+)</name>
        <dbReference type="ChEBI" id="CHEBI:29105"/>
        <label>1</label>
    </ligand>
</feature>
<feature type="binding site" evidence="1">
    <location>
        <position position="105"/>
    </location>
    <ligand>
        <name>Zn(2+)</name>
        <dbReference type="ChEBI" id="CHEBI:29105"/>
        <label>2</label>
    </ligand>
</feature>
<feature type="binding site" evidence="1">
    <location>
        <position position="140"/>
    </location>
    <ligand>
        <name>Zn(2+)</name>
        <dbReference type="ChEBI" id="CHEBI:29105"/>
        <label>2</label>
    </ligand>
</feature>
<feature type="binding site" evidence="1">
    <location>
        <position position="168"/>
    </location>
    <ligand>
        <name>Zn(2+)</name>
        <dbReference type="ChEBI" id="CHEBI:29105"/>
        <label>1</label>
    </ligand>
</feature>
<feature type="binding site" evidence="1">
    <location>
        <position position="354"/>
    </location>
    <ligand>
        <name>Zn(2+)</name>
        <dbReference type="ChEBI" id="CHEBI:29105"/>
        <label>2</label>
    </ligand>
</feature>
<protein>
    <recommendedName>
        <fullName evidence="1">Succinyl-diaminopimelate desuccinylase</fullName>
        <shortName evidence="1">SDAP desuccinylase</shortName>
        <ecNumber evidence="1">3.5.1.18</ecNumber>
    </recommendedName>
    <alternativeName>
        <fullName evidence="1">N-succinyl-LL-2,6-diaminoheptanedioate amidohydrolase</fullName>
    </alternativeName>
</protein>
<gene>
    <name evidence="1" type="primary">dapE</name>
    <name type="ordered locus">Shewmr7_2121</name>
</gene>
<keyword id="KW-0028">Amino-acid biosynthesis</keyword>
<keyword id="KW-0170">Cobalt</keyword>
<keyword id="KW-0220">Diaminopimelate biosynthesis</keyword>
<keyword id="KW-0378">Hydrolase</keyword>
<keyword id="KW-0457">Lysine biosynthesis</keyword>
<keyword id="KW-0479">Metal-binding</keyword>
<keyword id="KW-0862">Zinc</keyword>